<keyword id="KW-0002">3D-structure</keyword>
<keyword id="KW-0067">ATP-binding</keyword>
<keyword id="KW-0997">Cell inner membrane</keyword>
<keyword id="KW-1003">Cell membrane</keyword>
<keyword id="KW-0378">Hydrolase</keyword>
<keyword id="KW-0472">Membrane</keyword>
<keyword id="KW-0479">Metal-binding</keyword>
<keyword id="KW-0482">Metalloprotease</keyword>
<keyword id="KW-0547">Nucleotide-binding</keyword>
<keyword id="KW-0645">Protease</keyword>
<keyword id="KW-1185">Reference proteome</keyword>
<keyword id="KW-0812">Transmembrane</keyword>
<keyword id="KW-1133">Transmembrane helix</keyword>
<keyword id="KW-0862">Zinc</keyword>
<name>FTSH_AQUAE</name>
<gene>
    <name evidence="1" type="primary">ftsH</name>
    <name type="ordered locus">aq_936</name>
</gene>
<feature type="chain" id="PRO_0000084625" description="ATP-dependent zinc metalloprotease FtsH">
    <location>
        <begin position="1"/>
        <end position="634"/>
    </location>
</feature>
<feature type="topological domain" description="Cytoplasmic" evidence="1">
    <location>
        <begin position="1"/>
        <end position="5"/>
    </location>
</feature>
<feature type="transmembrane region" description="Helical" evidence="1">
    <location>
        <begin position="6"/>
        <end position="26"/>
    </location>
</feature>
<feature type="topological domain" description="Periplasmic" evidence="1">
    <location>
        <begin position="27"/>
        <end position="100"/>
    </location>
</feature>
<feature type="transmembrane region" description="Helical" evidence="1">
    <location>
        <begin position="101"/>
        <end position="121"/>
    </location>
</feature>
<feature type="topological domain" description="Cytoplasmic" evidence="1">
    <location>
        <begin position="122"/>
        <end position="634"/>
    </location>
</feature>
<feature type="region of interest" description="Disordered" evidence="2">
    <location>
        <begin position="615"/>
        <end position="634"/>
    </location>
</feature>
<feature type="active site" evidence="1">
    <location>
        <position position="419"/>
    </location>
</feature>
<feature type="binding site" evidence="1">
    <location>
        <begin position="195"/>
        <end position="202"/>
    </location>
    <ligand>
        <name>ATP</name>
        <dbReference type="ChEBI" id="CHEBI:30616"/>
    </ligand>
</feature>
<feature type="binding site" evidence="4">
    <location>
        <position position="418"/>
    </location>
    <ligand>
        <name>Zn(2+)</name>
        <dbReference type="ChEBI" id="CHEBI:29105"/>
        <note>catalytic</note>
    </ligand>
</feature>
<feature type="binding site" evidence="4">
    <location>
        <position position="422"/>
    </location>
    <ligand>
        <name>Zn(2+)</name>
        <dbReference type="ChEBI" id="CHEBI:29105"/>
        <note>catalytic</note>
    </ligand>
</feature>
<feature type="binding site" evidence="4">
    <location>
        <position position="496"/>
    </location>
    <ligand>
        <name>Zn(2+)</name>
        <dbReference type="ChEBI" id="CHEBI:29105"/>
        <note>catalytic</note>
    </ligand>
</feature>
<feature type="strand" evidence="7">
    <location>
        <begin position="145"/>
        <end position="149"/>
    </location>
</feature>
<feature type="helix" evidence="9">
    <location>
        <begin position="154"/>
        <end position="156"/>
    </location>
</feature>
<feature type="helix" evidence="9">
    <location>
        <begin position="161"/>
        <end position="175"/>
    </location>
</feature>
<feature type="helix" evidence="9">
    <location>
        <begin position="177"/>
        <end position="180"/>
    </location>
</feature>
<feature type="turn" evidence="9">
    <location>
        <begin position="182"/>
        <end position="184"/>
    </location>
</feature>
<feature type="strand" evidence="9">
    <location>
        <begin position="190"/>
        <end position="194"/>
    </location>
</feature>
<feature type="helix" evidence="9">
    <location>
        <begin position="201"/>
        <end position="211"/>
    </location>
</feature>
<feature type="strand" evidence="9">
    <location>
        <begin position="216"/>
        <end position="220"/>
    </location>
</feature>
<feature type="helix" evidence="9">
    <location>
        <begin position="221"/>
        <end position="225"/>
    </location>
</feature>
<feature type="strand" evidence="8">
    <location>
        <begin position="227"/>
        <end position="229"/>
    </location>
</feature>
<feature type="helix" evidence="9">
    <location>
        <begin position="231"/>
        <end position="245"/>
    </location>
</feature>
<feature type="strand" evidence="9">
    <location>
        <begin position="248"/>
        <end position="254"/>
    </location>
</feature>
<feature type="helix" evidence="9">
    <location>
        <begin position="256"/>
        <end position="258"/>
    </location>
</feature>
<feature type="helix" evidence="9">
    <location>
        <begin position="274"/>
        <end position="288"/>
    </location>
</feature>
<feature type="helix" evidence="7">
    <location>
        <begin position="291"/>
        <end position="293"/>
    </location>
</feature>
<feature type="strand" evidence="9">
    <location>
        <begin position="295"/>
        <end position="302"/>
    </location>
</feature>
<feature type="helix" evidence="9">
    <location>
        <begin position="304"/>
        <end position="306"/>
    </location>
</feature>
<feature type="helix" evidence="9">
    <location>
        <begin position="309"/>
        <end position="312"/>
    </location>
</feature>
<feature type="strand" evidence="9">
    <location>
        <begin position="319"/>
        <end position="322"/>
    </location>
</feature>
<feature type="helix" evidence="9">
    <location>
        <begin position="328"/>
        <end position="339"/>
    </location>
</feature>
<feature type="strand" evidence="7">
    <location>
        <begin position="340"/>
        <end position="342"/>
    </location>
</feature>
<feature type="helix" evidence="9">
    <location>
        <begin position="350"/>
        <end position="355"/>
    </location>
</feature>
<feature type="helix" evidence="9">
    <location>
        <begin position="362"/>
        <end position="378"/>
    </location>
</feature>
<feature type="strand" evidence="9">
    <location>
        <begin position="382"/>
        <end position="384"/>
    </location>
</feature>
<feature type="helix" evidence="9">
    <location>
        <begin position="386"/>
        <end position="398"/>
    </location>
</feature>
<feature type="helix" evidence="6">
    <location>
        <begin position="409"/>
        <end position="428"/>
    </location>
</feature>
<feature type="strand" evidence="8">
    <location>
        <begin position="429"/>
        <end position="431"/>
    </location>
</feature>
<feature type="strand" evidence="9">
    <location>
        <begin position="438"/>
        <end position="441"/>
    </location>
</feature>
<feature type="helix" evidence="6">
    <location>
        <begin position="463"/>
        <end position="488"/>
    </location>
</feature>
<feature type="helix" evidence="6">
    <location>
        <begin position="491"/>
        <end position="493"/>
    </location>
</feature>
<feature type="helix" evidence="6">
    <location>
        <begin position="494"/>
        <end position="509"/>
    </location>
</feature>
<feature type="turn" evidence="6">
    <location>
        <begin position="515"/>
        <end position="517"/>
    </location>
</feature>
<feature type="strand" evidence="9">
    <location>
        <begin position="535"/>
        <end position="537"/>
    </location>
</feature>
<feature type="helix" evidence="6">
    <location>
        <begin position="541"/>
        <end position="568"/>
    </location>
</feature>
<feature type="helix" evidence="6">
    <location>
        <begin position="570"/>
        <end position="583"/>
    </location>
</feature>
<feature type="strand" evidence="6">
    <location>
        <begin position="584"/>
        <end position="586"/>
    </location>
</feature>
<feature type="helix" evidence="6">
    <location>
        <begin position="588"/>
        <end position="598"/>
    </location>
</feature>
<sequence>MNALKNFFIWAIIIGAAIVAFNLFEGKREFTTKVSLNEVVKLVEEGKVSYAEVRGNTAIIQTKDGQKLEVTLPPNTNLVDKMVEKGVRVEVANPEPPGGWLVNVFLSWLPILFFIGIWIFLLRQMSGGGNVNRAFNFGKSRAKVYIEEKPKVTFKDVAGIEEVKEEVKEIIEYLKDPVKFQKLGGRPPKGVLLYGEPGVGKTLLAKAIAGEAHVPFISVSGSDFVEMFVGVGAARVRDLFETAKKHAPCIIFIDEIDAVGRARGAIPVGGGHDEREQTLNQLLVEMDGFDTSDGIIVIAATNRPDILDPALLRPGRFDRQIFIPKPDVRGRYEILKVHARNKKLAKDVDLEFVARATPGFTGADLENLLNEAALLAARKGKEEITMEEIEEALDRITMGLERKGMTISPKEKEKIAIHEAGHALMGLVSDDDDKVHKISIIPRGMALGVTQQLPIEDKHIYDKKDLYNKILVLLGGRAAEEVFFGKDGITTGAENDLQRATDLAYRMVSMWGMSDKVGPIAIRRVANPFLGGMTTAVDTSPDLLREIDEEVKRIITEQYEKAKAIVEEYKEPLKAVVKKLLEKETITCEEFVEVFKLYGIELKDKCKKEELFDKDRKSEENKELKSEEVKEEVV</sequence>
<evidence type="ECO:0000255" key="1">
    <source>
        <dbReference type="HAMAP-Rule" id="MF_01458"/>
    </source>
</evidence>
<evidence type="ECO:0000256" key="2">
    <source>
        <dbReference type="SAM" id="MobiDB-lite"/>
    </source>
</evidence>
<evidence type="ECO:0000269" key="3">
    <source>
    </source>
</evidence>
<evidence type="ECO:0000305" key="4"/>
<evidence type="ECO:0000305" key="5">
    <source>
    </source>
</evidence>
<evidence type="ECO:0007829" key="6">
    <source>
        <dbReference type="PDB" id="2DI4"/>
    </source>
</evidence>
<evidence type="ECO:0007829" key="7">
    <source>
        <dbReference type="PDB" id="4WW0"/>
    </source>
</evidence>
<evidence type="ECO:0007829" key="8">
    <source>
        <dbReference type="PDB" id="4Z8X"/>
    </source>
</evidence>
<evidence type="ECO:0007829" key="9">
    <source>
        <dbReference type="PDB" id="6GCN"/>
    </source>
</evidence>
<accession>O67077</accession>
<reference key="1">
    <citation type="journal article" date="1998" name="Nature">
        <title>The complete genome of the hyperthermophilic bacterium Aquifex aeolicus.</title>
        <authorList>
            <person name="Deckert G."/>
            <person name="Warren P.V."/>
            <person name="Gaasterland T."/>
            <person name="Young W.G."/>
            <person name="Lenox A.L."/>
            <person name="Graham D.E."/>
            <person name="Overbeek R."/>
            <person name="Snead M.A."/>
            <person name="Keller M."/>
            <person name="Aujay M."/>
            <person name="Huber R."/>
            <person name="Feldman R.A."/>
            <person name="Short J.M."/>
            <person name="Olsen G.J."/>
            <person name="Swanson R.V."/>
        </authorList>
    </citation>
    <scope>NUCLEOTIDE SEQUENCE [LARGE SCALE GENOMIC DNA]</scope>
    <source>
        <strain>VF5</strain>
    </source>
</reference>
<reference key="2">
    <citation type="journal article" date="2006" name="Mol. Cell">
        <title>Structure of the whole cytosolic region of ATP-dependent protease FtsH.</title>
        <authorList>
            <person name="Suno R."/>
            <person name="Niwa H."/>
            <person name="Tsuchiya D."/>
            <person name="Zhang X."/>
            <person name="Yoshida M."/>
            <person name="Morikawa K."/>
        </authorList>
    </citation>
    <scope>X-RAY CRYSTALLOGRAPHY (2.79 ANGSTROMS) OF 405-634</scope>
    <scope>COFACTOR</scope>
    <scope>SUBUNIT</scope>
</reference>
<organism>
    <name type="scientific">Aquifex aeolicus (strain VF5)</name>
    <dbReference type="NCBI Taxonomy" id="224324"/>
    <lineage>
        <taxon>Bacteria</taxon>
        <taxon>Pseudomonadati</taxon>
        <taxon>Aquificota</taxon>
        <taxon>Aquificia</taxon>
        <taxon>Aquificales</taxon>
        <taxon>Aquificaceae</taxon>
        <taxon>Aquifex</taxon>
    </lineage>
</organism>
<protein>
    <recommendedName>
        <fullName evidence="1">ATP-dependent zinc metalloprotease FtsH</fullName>
        <ecNumber evidence="1">3.4.24.-</ecNumber>
    </recommendedName>
</protein>
<proteinExistence type="evidence at protein level"/>
<comment type="function">
    <text evidence="1">Acts as a processive, ATP-dependent zinc metallopeptidase for both cytoplasmic and membrane proteins. Plays a role in the quality control of integral membrane proteins.</text>
</comment>
<comment type="cofactor">
    <cofactor evidence="5">
        <name>Zn(2+)</name>
        <dbReference type="ChEBI" id="CHEBI:29105"/>
    </cofactor>
    <text evidence="5">Binds 1 zinc ion per subunit.</text>
</comment>
<comment type="subunit">
    <text evidence="3">The isolated protease domain (residues 405-634) forms a stable hexamer.</text>
</comment>
<comment type="subcellular location">
    <subcellularLocation>
        <location>Cell inner membrane</location>
        <topology>Multi-pass membrane protein</topology>
        <orientation>Cytoplasmic side</orientation>
    </subcellularLocation>
</comment>
<comment type="similarity">
    <text evidence="1">In the central section; belongs to the AAA ATPase family.</text>
</comment>
<comment type="similarity">
    <text evidence="1">In the C-terminal section; belongs to the peptidase M41 family.</text>
</comment>
<dbReference type="EC" id="3.4.24.-" evidence="1"/>
<dbReference type="EMBL" id="AE000657">
    <property type="protein sequence ID" value="AAC07029.1"/>
    <property type="molecule type" value="Genomic_DNA"/>
</dbReference>
<dbReference type="PIR" id="B70381">
    <property type="entry name" value="B70381"/>
</dbReference>
<dbReference type="RefSeq" id="NP_213640.1">
    <property type="nucleotide sequence ID" value="NC_000918.1"/>
</dbReference>
<dbReference type="RefSeq" id="WP_010880578.1">
    <property type="nucleotide sequence ID" value="NC_000918.1"/>
</dbReference>
<dbReference type="PDB" id="2DI4">
    <property type="method" value="X-ray"/>
    <property type="resolution" value="2.79 A"/>
    <property type="chains" value="A/B=405-634"/>
</dbReference>
<dbReference type="PDB" id="4WW0">
    <property type="method" value="X-ray"/>
    <property type="resolution" value="2.96 A"/>
    <property type="chains" value="A/B/C=141-634"/>
</dbReference>
<dbReference type="PDB" id="4Z8X">
    <property type="method" value="X-ray"/>
    <property type="resolution" value="3.25 A"/>
    <property type="chains" value="A/B/C=142-634"/>
</dbReference>
<dbReference type="PDB" id="6GCN">
    <property type="method" value="X-ray"/>
    <property type="resolution" value="2.95 A"/>
    <property type="chains" value="A/B/C/D=151-608"/>
</dbReference>
<dbReference type="PDB" id="6GCO">
    <property type="method" value="X-ray"/>
    <property type="resolution" value="3.32 A"/>
    <property type="chains" value="A/B=151-608"/>
</dbReference>
<dbReference type="PDBsum" id="2DI4"/>
<dbReference type="PDBsum" id="4WW0"/>
<dbReference type="PDBsum" id="4Z8X"/>
<dbReference type="PDBsum" id="6GCN"/>
<dbReference type="PDBsum" id="6GCO"/>
<dbReference type="SMR" id="O67077"/>
<dbReference type="FunCoup" id="O67077">
    <property type="interactions" value="397"/>
</dbReference>
<dbReference type="STRING" id="224324.aq_936"/>
<dbReference type="MEROPS" id="M41.021"/>
<dbReference type="TCDB" id="3.A.29.1.4">
    <property type="family name" value="the mitochondrial inner membrane i-aaa protease complex (mimp) family"/>
</dbReference>
<dbReference type="EnsemblBacteria" id="AAC07029">
    <property type="protein sequence ID" value="AAC07029"/>
    <property type="gene ID" value="aq_936"/>
</dbReference>
<dbReference type="KEGG" id="aae:aq_936"/>
<dbReference type="PATRIC" id="fig|224324.8.peg.734"/>
<dbReference type="eggNOG" id="COG0465">
    <property type="taxonomic scope" value="Bacteria"/>
</dbReference>
<dbReference type="HOGENOM" id="CLU_000688_16_2_0"/>
<dbReference type="InParanoid" id="O67077"/>
<dbReference type="OrthoDB" id="9809379at2"/>
<dbReference type="BRENDA" id="3.4.24.B17">
    <property type="organism ID" value="396"/>
</dbReference>
<dbReference type="BRENDA" id="3.4.24.B20">
    <property type="organism ID" value="396"/>
</dbReference>
<dbReference type="EvolutionaryTrace" id="O67077"/>
<dbReference type="Proteomes" id="UP000000798">
    <property type="component" value="Chromosome"/>
</dbReference>
<dbReference type="GO" id="GO:0005886">
    <property type="term" value="C:plasma membrane"/>
    <property type="evidence" value="ECO:0000318"/>
    <property type="project" value="GO_Central"/>
</dbReference>
<dbReference type="GO" id="GO:0005524">
    <property type="term" value="F:ATP binding"/>
    <property type="evidence" value="ECO:0007669"/>
    <property type="project" value="UniProtKB-UniRule"/>
</dbReference>
<dbReference type="GO" id="GO:0016887">
    <property type="term" value="F:ATP hydrolysis activity"/>
    <property type="evidence" value="ECO:0007669"/>
    <property type="project" value="UniProtKB-UniRule"/>
</dbReference>
<dbReference type="GO" id="GO:0004176">
    <property type="term" value="F:ATP-dependent peptidase activity"/>
    <property type="evidence" value="ECO:0000318"/>
    <property type="project" value="GO_Central"/>
</dbReference>
<dbReference type="GO" id="GO:0004222">
    <property type="term" value="F:metalloendopeptidase activity"/>
    <property type="evidence" value="ECO:0007669"/>
    <property type="project" value="InterPro"/>
</dbReference>
<dbReference type="GO" id="GO:0008270">
    <property type="term" value="F:zinc ion binding"/>
    <property type="evidence" value="ECO:0007669"/>
    <property type="project" value="UniProtKB-UniRule"/>
</dbReference>
<dbReference type="GO" id="GO:0030163">
    <property type="term" value="P:protein catabolic process"/>
    <property type="evidence" value="ECO:0000318"/>
    <property type="project" value="GO_Central"/>
</dbReference>
<dbReference type="GO" id="GO:0006508">
    <property type="term" value="P:proteolysis"/>
    <property type="evidence" value="ECO:0000318"/>
    <property type="project" value="GO_Central"/>
</dbReference>
<dbReference type="CDD" id="cd19501">
    <property type="entry name" value="RecA-like_FtsH"/>
    <property type="match status" value="1"/>
</dbReference>
<dbReference type="FunFam" id="1.10.8.60:FF:000001">
    <property type="entry name" value="ATP-dependent zinc metalloprotease FtsH"/>
    <property type="match status" value="1"/>
</dbReference>
<dbReference type="FunFam" id="1.20.58.760:FF:000001">
    <property type="entry name" value="ATP-dependent zinc metalloprotease FtsH"/>
    <property type="match status" value="1"/>
</dbReference>
<dbReference type="FunFam" id="3.40.50.300:FF:000001">
    <property type="entry name" value="ATP-dependent zinc metalloprotease FtsH"/>
    <property type="match status" value="1"/>
</dbReference>
<dbReference type="Gene3D" id="1.10.8.60">
    <property type="match status" value="1"/>
</dbReference>
<dbReference type="Gene3D" id="3.30.720.210">
    <property type="match status" value="1"/>
</dbReference>
<dbReference type="Gene3D" id="3.40.50.300">
    <property type="entry name" value="P-loop containing nucleotide triphosphate hydrolases"/>
    <property type="match status" value="1"/>
</dbReference>
<dbReference type="Gene3D" id="1.20.58.760">
    <property type="entry name" value="Peptidase M41"/>
    <property type="match status" value="1"/>
</dbReference>
<dbReference type="HAMAP" id="MF_01458">
    <property type="entry name" value="FtsH"/>
    <property type="match status" value="1"/>
</dbReference>
<dbReference type="InterPro" id="IPR003593">
    <property type="entry name" value="AAA+_ATPase"/>
</dbReference>
<dbReference type="InterPro" id="IPR041569">
    <property type="entry name" value="AAA_lid_3"/>
</dbReference>
<dbReference type="InterPro" id="IPR003959">
    <property type="entry name" value="ATPase_AAA_core"/>
</dbReference>
<dbReference type="InterPro" id="IPR003960">
    <property type="entry name" value="ATPase_AAA_CS"/>
</dbReference>
<dbReference type="InterPro" id="IPR005936">
    <property type="entry name" value="FtsH"/>
</dbReference>
<dbReference type="InterPro" id="IPR027417">
    <property type="entry name" value="P-loop_NTPase"/>
</dbReference>
<dbReference type="InterPro" id="IPR011546">
    <property type="entry name" value="Pept_M41_FtsH_extracell"/>
</dbReference>
<dbReference type="InterPro" id="IPR000642">
    <property type="entry name" value="Peptidase_M41"/>
</dbReference>
<dbReference type="InterPro" id="IPR037219">
    <property type="entry name" value="Peptidase_M41-like"/>
</dbReference>
<dbReference type="NCBIfam" id="TIGR01241">
    <property type="entry name" value="FtsH_fam"/>
    <property type="match status" value="1"/>
</dbReference>
<dbReference type="PANTHER" id="PTHR23076:SF97">
    <property type="entry name" value="ATP-DEPENDENT ZINC METALLOPROTEASE YME1L1"/>
    <property type="match status" value="1"/>
</dbReference>
<dbReference type="PANTHER" id="PTHR23076">
    <property type="entry name" value="METALLOPROTEASE M41 FTSH"/>
    <property type="match status" value="1"/>
</dbReference>
<dbReference type="Pfam" id="PF00004">
    <property type="entry name" value="AAA"/>
    <property type="match status" value="1"/>
</dbReference>
<dbReference type="Pfam" id="PF17862">
    <property type="entry name" value="AAA_lid_3"/>
    <property type="match status" value="1"/>
</dbReference>
<dbReference type="Pfam" id="PF06480">
    <property type="entry name" value="FtsH_ext"/>
    <property type="match status" value="1"/>
</dbReference>
<dbReference type="Pfam" id="PF01434">
    <property type="entry name" value="Peptidase_M41"/>
    <property type="match status" value="1"/>
</dbReference>
<dbReference type="SMART" id="SM00382">
    <property type="entry name" value="AAA"/>
    <property type="match status" value="1"/>
</dbReference>
<dbReference type="SUPFAM" id="SSF140990">
    <property type="entry name" value="FtsH protease domain-like"/>
    <property type="match status" value="1"/>
</dbReference>
<dbReference type="SUPFAM" id="SSF52540">
    <property type="entry name" value="P-loop containing nucleoside triphosphate hydrolases"/>
    <property type="match status" value="1"/>
</dbReference>
<dbReference type="PROSITE" id="PS00674">
    <property type="entry name" value="AAA"/>
    <property type="match status" value="1"/>
</dbReference>